<comment type="function">
    <text evidence="5">Involved in the maintenance of embryonic stem (ES) cell pluripotency. Dispensable for self-renewal of pluripotent ES cells and establishment of germ cells. Associates with specific target mRNAs.</text>
</comment>
<comment type="subcellular location">
    <subcellularLocation>
        <location evidence="4 6">Cytoplasm</location>
    </subcellularLocation>
</comment>
<comment type="developmental stage">
    <text evidence="1 2 3 4 5 6 8">Pluripotent cell-specific. Expressed in zygotes, cleavage-stage embryos and blastocysts, embryonic stem (ES) and embryonic germ (EG) cells. Detected in both the trophectoderm (TE) and inner cell mass (ICM) of blastocysts. More abundant in the ICM than TE at 3.5 dpc blastocyst stage. Expressed in primordial germ (PGC) cells from 10.5 to 13.5 dpc. Expressed in developing gonads from 11.5 to 15.5 dpc. Progressively undetectable in ovary from 13.5 to 15.5 dpc. Undetectable in testis after 15.5 dpc. Not expressed in somatic cells at 13.5 dpc (at protein level). Expressed in embryonic stem (ES) and embryonic carcinoma (EC) cells. Not detected during the differentiation of stem cells or midgestation embryos nor in neonatal tissues. Weakly expressed or not detected in oocytes and fertilized eggs.</text>
</comment>
<comment type="induction">
    <text evidence="3 7">Down-regulated by retinoic acid in embryonic carcinoma (EC) cells and in developing germ cells.</text>
</comment>
<comment type="disruption phenotype">
    <text evidence="5">Mice develop normally and are fertile. ES cells derived from these mice demonstrate normal morphology, proliferation and differentiation.</text>
</comment>
<comment type="similarity">
    <text evidence="9">Belongs to the KHDC1 family.</text>
</comment>
<dbReference type="EMBL" id="AF490349">
    <property type="protein sequence ID" value="AAO84507.1"/>
    <property type="molecule type" value="mRNA"/>
</dbReference>
<dbReference type="EMBL" id="AK010519">
    <property type="protein sequence ID" value="BAB27001.2"/>
    <property type="molecule type" value="mRNA"/>
</dbReference>
<dbReference type="EMBL" id="AK010584">
    <property type="protein sequence ID" value="BAB27045.2"/>
    <property type="molecule type" value="mRNA"/>
</dbReference>
<dbReference type="EMBL" id="AK145761">
    <property type="protein sequence ID" value="BAE26633.1"/>
    <property type="molecule type" value="mRNA"/>
</dbReference>
<dbReference type="EMBL" id="BC092353">
    <property type="protein sequence ID" value="AAH92353.1"/>
    <property type="molecule type" value="mRNA"/>
</dbReference>
<dbReference type="EMBL" id="BC092354">
    <property type="protein sequence ID" value="AAH92354.1"/>
    <property type="molecule type" value="mRNA"/>
</dbReference>
<dbReference type="EMBL" id="BC095979">
    <property type="protein sequence ID" value="AAH95979.1"/>
    <property type="molecule type" value="mRNA"/>
</dbReference>
<dbReference type="CCDS" id="CCDS23360.1"/>
<dbReference type="PIR" id="A55058">
    <property type="entry name" value="A55058"/>
</dbReference>
<dbReference type="RefSeq" id="NP_079550.2">
    <property type="nucleotide sequence ID" value="NM_025274.3"/>
</dbReference>
<dbReference type="SMR" id="Q9CQS7"/>
<dbReference type="FunCoup" id="Q9CQS7">
    <property type="interactions" value="135"/>
</dbReference>
<dbReference type="STRING" id="10090.ENSMUSP00000071881"/>
<dbReference type="iPTMnet" id="Q9CQS7"/>
<dbReference type="PhosphoSitePlus" id="Q9CQS7"/>
<dbReference type="REPRODUCTION-2DPAGE" id="Q9CQS7"/>
<dbReference type="PaxDb" id="10090-ENSMUSP00000071881"/>
<dbReference type="PeptideAtlas" id="Q9CQS7"/>
<dbReference type="ProteomicsDB" id="279801"/>
<dbReference type="Antibodypedia" id="46318">
    <property type="antibodies" value="162 antibodies from 22 providers"/>
</dbReference>
<dbReference type="DNASU" id="434423"/>
<dbReference type="Ensembl" id="ENSMUST00000071991.6">
    <property type="protein sequence ID" value="ENSMUSP00000071881.6"/>
    <property type="gene ID" value="ENSMUSG00000060461.6"/>
</dbReference>
<dbReference type="GeneID" id="434423"/>
<dbReference type="KEGG" id="mmu:434423"/>
<dbReference type="UCSC" id="uc009qug.2">
    <property type="organism name" value="mouse"/>
</dbReference>
<dbReference type="AGR" id="MGI:101800"/>
<dbReference type="CTD" id="434423"/>
<dbReference type="MGI" id="MGI:101800">
    <property type="gene designation" value="Dppa5a"/>
</dbReference>
<dbReference type="VEuPathDB" id="HostDB:ENSMUSG00000060461"/>
<dbReference type="eggNOG" id="ENOG502RW7D">
    <property type="taxonomic scope" value="Eukaryota"/>
</dbReference>
<dbReference type="GeneTree" id="ENSGT00940000154353"/>
<dbReference type="HOGENOM" id="CLU_169085_0_0_1"/>
<dbReference type="InParanoid" id="Q9CQS7"/>
<dbReference type="OMA" id="KLRTRWM"/>
<dbReference type="OrthoDB" id="9510166at2759"/>
<dbReference type="PhylomeDB" id="Q9CQS7"/>
<dbReference type="TreeFam" id="TF338690"/>
<dbReference type="BioGRID-ORCS" id="434423">
    <property type="hits" value="12 hits in 59 CRISPR screens"/>
</dbReference>
<dbReference type="ChiTaRS" id="Dppa5a">
    <property type="organism name" value="mouse"/>
</dbReference>
<dbReference type="PRO" id="PR:Q9CQS7"/>
<dbReference type="Proteomes" id="UP000000589">
    <property type="component" value="Chromosome 9"/>
</dbReference>
<dbReference type="RNAct" id="Q9CQS7">
    <property type="molecule type" value="protein"/>
</dbReference>
<dbReference type="Bgee" id="ENSMUSG00000060461">
    <property type="expression patterns" value="Expressed in embryonic cell in blastocyst and 51 other cell types or tissues"/>
</dbReference>
<dbReference type="GO" id="GO:0005737">
    <property type="term" value="C:cytoplasm"/>
    <property type="evidence" value="ECO:0000314"/>
    <property type="project" value="MGI"/>
</dbReference>
<dbReference type="GO" id="GO:0003729">
    <property type="term" value="F:mRNA binding"/>
    <property type="evidence" value="ECO:0000314"/>
    <property type="project" value="MGI"/>
</dbReference>
<dbReference type="GO" id="GO:0010468">
    <property type="term" value="P:regulation of gene expression"/>
    <property type="evidence" value="ECO:0000315"/>
    <property type="project" value="MGI"/>
</dbReference>
<dbReference type="CDD" id="cd12795">
    <property type="entry name" value="FILIA_N_like"/>
    <property type="match status" value="1"/>
</dbReference>
<dbReference type="FunFam" id="3.30.1370.10:FF:000079">
    <property type="entry name" value="developmental pluripotency-associated 5 protein-like"/>
    <property type="match status" value="1"/>
</dbReference>
<dbReference type="Gene3D" id="3.30.1370.10">
    <property type="entry name" value="K Homology domain, type 1"/>
    <property type="match status" value="1"/>
</dbReference>
<dbReference type="InterPro" id="IPR036612">
    <property type="entry name" value="KH_dom_type_1_sf"/>
</dbReference>
<dbReference type="InterPro" id="IPR031952">
    <property type="entry name" value="MOEP19_KH-like"/>
</dbReference>
<dbReference type="PANTHER" id="PTHR31368">
    <property type="entry name" value="DEVELOPMENT PLURPOTENCY-ASSOCIATED PROTEIN 1/5 FAMILY MEMBER"/>
    <property type="match status" value="1"/>
</dbReference>
<dbReference type="PANTHER" id="PTHR31368:SF4">
    <property type="entry name" value="DEVELOPMENTAL PLURIPOTENCY-ASSOCIATED 5 PROTEIN"/>
    <property type="match status" value="1"/>
</dbReference>
<dbReference type="Pfam" id="PF16005">
    <property type="entry name" value="MOEP19"/>
    <property type="match status" value="1"/>
</dbReference>
<dbReference type="SUPFAM" id="SSF54791">
    <property type="entry name" value="Eukaryotic type KH-domain (KH-domain type I)"/>
    <property type="match status" value="1"/>
</dbReference>
<feature type="chain" id="PRO_0000311976" description="Developmental pluripotency-associated protein 5A">
    <location>
        <begin position="1"/>
        <end position="118"/>
    </location>
</feature>
<feature type="domain" description="KH; atypical">
    <location>
        <begin position="24"/>
        <end position="86"/>
    </location>
</feature>
<accession>Q9CQS7</accession>
<gene>
    <name type="primary">Dppa5a</name>
    <name type="synonym">Dppa5</name>
    <name type="synonym">Ecat2</name>
    <name type="synonym">Esg1</name>
    <name type="synonym">Ph34</name>
</gene>
<organism>
    <name type="scientific">Mus musculus</name>
    <name type="common">Mouse</name>
    <dbReference type="NCBI Taxonomy" id="10090"/>
    <lineage>
        <taxon>Eukaryota</taxon>
        <taxon>Metazoa</taxon>
        <taxon>Chordata</taxon>
        <taxon>Craniata</taxon>
        <taxon>Vertebrata</taxon>
        <taxon>Euteleostomi</taxon>
        <taxon>Mammalia</taxon>
        <taxon>Eutheria</taxon>
        <taxon>Euarchontoglires</taxon>
        <taxon>Glires</taxon>
        <taxon>Rodentia</taxon>
        <taxon>Myomorpha</taxon>
        <taxon>Muroidea</taxon>
        <taxon>Muridae</taxon>
        <taxon>Murinae</taxon>
        <taxon>Mus</taxon>
        <taxon>Mus</taxon>
    </lineage>
</organism>
<reference key="1">
    <citation type="journal article" date="1991" name="Differentiation">
        <title>Changes in gene expression following exposure of nulli-SCCl murine embryonal carcinoma cells to inducers of differentiation: characterization of a down-regulated mRNA.</title>
        <authorList>
            <person name="Astigiano S."/>
            <person name="Barkai U."/>
            <person name="Abarzua P."/>
            <person name="Tan S.C."/>
            <person name="Harper M.I."/>
            <person name="Sherman M.I."/>
        </authorList>
    </citation>
    <scope>NUCLEOTIDE SEQUENCE [MRNA]</scope>
    <scope>INDUCTION</scope>
    <scope>TISSUE SPECIFICITY</scope>
</reference>
<reference key="2">
    <citation type="journal article" date="2003" name="Development">
        <title>Incomplete reactivation of Oct4-related genes in mouse embryos cloned from somatic nuclei.</title>
        <authorList>
            <person name="Bortvin A."/>
            <person name="Eggan K."/>
            <person name="Skaletsky H."/>
            <person name="Akutsu H."/>
            <person name="Berry D.L."/>
            <person name="Yanagimachi R."/>
            <person name="Page D.C."/>
            <person name="Jaenisch R."/>
        </authorList>
    </citation>
    <scope>NUCLEOTIDE SEQUENCE [MRNA]</scope>
    <scope>DEVELOPMENTAL STAGE</scope>
</reference>
<reference key="3">
    <citation type="journal article" date="2005" name="Science">
        <title>The transcriptional landscape of the mammalian genome.</title>
        <authorList>
            <person name="Carninci P."/>
            <person name="Kasukawa T."/>
            <person name="Katayama S."/>
            <person name="Gough J."/>
            <person name="Frith M.C."/>
            <person name="Maeda N."/>
            <person name="Oyama R."/>
            <person name="Ravasi T."/>
            <person name="Lenhard B."/>
            <person name="Wells C."/>
            <person name="Kodzius R."/>
            <person name="Shimokawa K."/>
            <person name="Bajic V.B."/>
            <person name="Brenner S.E."/>
            <person name="Batalov S."/>
            <person name="Forrest A.R."/>
            <person name="Zavolan M."/>
            <person name="Davis M.J."/>
            <person name="Wilming L.G."/>
            <person name="Aidinis V."/>
            <person name="Allen J.E."/>
            <person name="Ambesi-Impiombato A."/>
            <person name="Apweiler R."/>
            <person name="Aturaliya R.N."/>
            <person name="Bailey T.L."/>
            <person name="Bansal M."/>
            <person name="Baxter L."/>
            <person name="Beisel K.W."/>
            <person name="Bersano T."/>
            <person name="Bono H."/>
            <person name="Chalk A.M."/>
            <person name="Chiu K.P."/>
            <person name="Choudhary V."/>
            <person name="Christoffels A."/>
            <person name="Clutterbuck D.R."/>
            <person name="Crowe M.L."/>
            <person name="Dalla E."/>
            <person name="Dalrymple B.P."/>
            <person name="de Bono B."/>
            <person name="Della Gatta G."/>
            <person name="di Bernardo D."/>
            <person name="Down T."/>
            <person name="Engstrom P."/>
            <person name="Fagiolini M."/>
            <person name="Faulkner G."/>
            <person name="Fletcher C.F."/>
            <person name="Fukushima T."/>
            <person name="Furuno M."/>
            <person name="Futaki S."/>
            <person name="Gariboldi M."/>
            <person name="Georgii-Hemming P."/>
            <person name="Gingeras T.R."/>
            <person name="Gojobori T."/>
            <person name="Green R.E."/>
            <person name="Gustincich S."/>
            <person name="Harbers M."/>
            <person name="Hayashi Y."/>
            <person name="Hensch T.K."/>
            <person name="Hirokawa N."/>
            <person name="Hill D."/>
            <person name="Huminiecki L."/>
            <person name="Iacono M."/>
            <person name="Ikeo K."/>
            <person name="Iwama A."/>
            <person name="Ishikawa T."/>
            <person name="Jakt M."/>
            <person name="Kanapin A."/>
            <person name="Katoh M."/>
            <person name="Kawasawa Y."/>
            <person name="Kelso J."/>
            <person name="Kitamura H."/>
            <person name="Kitano H."/>
            <person name="Kollias G."/>
            <person name="Krishnan S.P."/>
            <person name="Kruger A."/>
            <person name="Kummerfeld S.K."/>
            <person name="Kurochkin I.V."/>
            <person name="Lareau L.F."/>
            <person name="Lazarevic D."/>
            <person name="Lipovich L."/>
            <person name="Liu J."/>
            <person name="Liuni S."/>
            <person name="McWilliam S."/>
            <person name="Madan Babu M."/>
            <person name="Madera M."/>
            <person name="Marchionni L."/>
            <person name="Matsuda H."/>
            <person name="Matsuzawa S."/>
            <person name="Miki H."/>
            <person name="Mignone F."/>
            <person name="Miyake S."/>
            <person name="Morris K."/>
            <person name="Mottagui-Tabar S."/>
            <person name="Mulder N."/>
            <person name="Nakano N."/>
            <person name="Nakauchi H."/>
            <person name="Ng P."/>
            <person name="Nilsson R."/>
            <person name="Nishiguchi S."/>
            <person name="Nishikawa S."/>
            <person name="Nori F."/>
            <person name="Ohara O."/>
            <person name="Okazaki Y."/>
            <person name="Orlando V."/>
            <person name="Pang K.C."/>
            <person name="Pavan W.J."/>
            <person name="Pavesi G."/>
            <person name="Pesole G."/>
            <person name="Petrovsky N."/>
            <person name="Piazza S."/>
            <person name="Reed J."/>
            <person name="Reid J.F."/>
            <person name="Ring B.Z."/>
            <person name="Ringwald M."/>
            <person name="Rost B."/>
            <person name="Ruan Y."/>
            <person name="Salzberg S.L."/>
            <person name="Sandelin A."/>
            <person name="Schneider C."/>
            <person name="Schoenbach C."/>
            <person name="Sekiguchi K."/>
            <person name="Semple C.A."/>
            <person name="Seno S."/>
            <person name="Sessa L."/>
            <person name="Sheng Y."/>
            <person name="Shibata Y."/>
            <person name="Shimada H."/>
            <person name="Shimada K."/>
            <person name="Silva D."/>
            <person name="Sinclair B."/>
            <person name="Sperling S."/>
            <person name="Stupka E."/>
            <person name="Sugiura K."/>
            <person name="Sultana R."/>
            <person name="Takenaka Y."/>
            <person name="Taki K."/>
            <person name="Tammoja K."/>
            <person name="Tan S.L."/>
            <person name="Tang S."/>
            <person name="Taylor M.S."/>
            <person name="Tegner J."/>
            <person name="Teichmann S.A."/>
            <person name="Ueda H.R."/>
            <person name="van Nimwegen E."/>
            <person name="Verardo R."/>
            <person name="Wei C.L."/>
            <person name="Yagi K."/>
            <person name="Yamanishi H."/>
            <person name="Zabarovsky E."/>
            <person name="Zhu S."/>
            <person name="Zimmer A."/>
            <person name="Hide W."/>
            <person name="Bult C."/>
            <person name="Grimmond S.M."/>
            <person name="Teasdale R.D."/>
            <person name="Liu E.T."/>
            <person name="Brusic V."/>
            <person name="Quackenbush J."/>
            <person name="Wahlestedt C."/>
            <person name="Mattick J.S."/>
            <person name="Hume D.A."/>
            <person name="Kai C."/>
            <person name="Sasaki D."/>
            <person name="Tomaru Y."/>
            <person name="Fukuda S."/>
            <person name="Kanamori-Katayama M."/>
            <person name="Suzuki M."/>
            <person name="Aoki J."/>
            <person name="Arakawa T."/>
            <person name="Iida J."/>
            <person name="Imamura K."/>
            <person name="Itoh M."/>
            <person name="Kato T."/>
            <person name="Kawaji H."/>
            <person name="Kawagashira N."/>
            <person name="Kawashima T."/>
            <person name="Kojima M."/>
            <person name="Kondo S."/>
            <person name="Konno H."/>
            <person name="Nakano K."/>
            <person name="Ninomiya N."/>
            <person name="Nishio T."/>
            <person name="Okada M."/>
            <person name="Plessy C."/>
            <person name="Shibata K."/>
            <person name="Shiraki T."/>
            <person name="Suzuki S."/>
            <person name="Tagami M."/>
            <person name="Waki K."/>
            <person name="Watahiki A."/>
            <person name="Okamura-Oho Y."/>
            <person name="Suzuki H."/>
            <person name="Kawai J."/>
            <person name="Hayashizaki Y."/>
        </authorList>
    </citation>
    <scope>NUCLEOTIDE SEQUENCE [LARGE SCALE MRNA]</scope>
    <source>
        <strain>C57BL/6J</strain>
        <tissue>Blastocyst</tissue>
        <tissue>Embryonic stem cell</tissue>
    </source>
</reference>
<reference key="4">
    <citation type="journal article" date="2004" name="Genome Res.">
        <title>The status, quality, and expansion of the NIH full-length cDNA project: the Mammalian Gene Collection (MGC).</title>
        <authorList>
            <consortium name="The MGC Project Team"/>
        </authorList>
    </citation>
    <scope>NUCLEOTIDE SEQUENCE [LARGE SCALE MRNA]</scope>
    <source>
        <strain>C57BL/6J</strain>
        <tissue>Embryonic germ cell</tissue>
    </source>
</reference>
<reference key="5">
    <citation type="journal article" date="1994" name="Cell Growth Differ.">
        <title>Cloning of embryonal stem cell-specific genes: characterization of the transcriptionally controlled gene esg-1.</title>
        <authorList>
            <person name="Bierbaum P."/>
            <person name="MacLean-Hunter S."/>
            <person name="Ehlert F."/>
            <person name="Moeroey T."/>
            <person name="Mueller R."/>
        </authorList>
    </citation>
    <scope>DEVELOPMENTAL STAGE</scope>
</reference>
<reference key="6">
    <citation type="journal article" date="2002" name="Genome Res.">
        <title>Gene expression profiling of embryo-derived stem cells reveals candidate genes associated with pluripotency and lineage specificity.</title>
        <authorList>
            <person name="Tanaka T.S."/>
            <person name="Kunath T."/>
            <person name="Kimber W.L."/>
            <person name="Jaradat S.A."/>
            <person name="Stagg C.A."/>
            <person name="Usuda M."/>
            <person name="Yokota T."/>
            <person name="Niwa H."/>
            <person name="Rossant J."/>
            <person name="Ko M.S."/>
        </authorList>
    </citation>
    <scope>DEVELOPMENTAL STAGE</scope>
</reference>
<reference key="7">
    <citation type="journal article" date="2005" name="Stem Cells">
        <title>Identification of developmental pluripotency associated 5 expression in human pluripotent stem cells.</title>
        <authorList>
            <person name="Kim S.-K."/>
            <person name="Suh M.R."/>
            <person name="Yoon H.S."/>
            <person name="Lee J.B."/>
            <person name="Oh S.K."/>
            <person name="Moon S.-Y."/>
            <person name="Moon S.H."/>
            <person name="Lee J.Y."/>
            <person name="Hwang J.H."/>
            <person name="Cho W.J."/>
            <person name="Kim K.-S."/>
        </authorList>
    </citation>
    <scope>INDUCTION</scope>
    <scope>DEVELOPMENTAL STAGE</scope>
</reference>
<reference key="8">
    <citation type="journal article" date="2005" name="Stem Cells">
        <title>Analysis of Esg1 expression in pluripotent cells and the germline reveals similarities with Oct4 and Sox2 and differences between human pluripotent cell lines.</title>
        <authorList>
            <person name="Western P."/>
            <person name="Maldonado-Saldivia J."/>
            <person name="van den Bergen J."/>
            <person name="Hajkova P."/>
            <person name="Saitou M."/>
            <person name="Barton S."/>
            <person name="Surani M.A."/>
        </authorList>
    </citation>
    <scope>SUBCELLULAR LOCATION</scope>
    <scope>DEVELOPMENTAL STAGE</scope>
</reference>
<reference key="9">
    <citation type="journal article" date="2006" name="BMC Dev. Biol.">
        <title>Identification and targeted disruption of the mouse gene encoding ESG1 (PH34/ECAT2/DPPA5).</title>
        <authorList>
            <person name="Amano H."/>
            <person name="Itakura K."/>
            <person name="Maruyama M."/>
            <person name="Ichisaka T."/>
            <person name="Nakagawa M."/>
            <person name="Yamanaka S."/>
        </authorList>
    </citation>
    <scope>FUNCTION</scope>
    <scope>DEVELOPMENTAL STAGE</scope>
    <scope>DISRUPTION PHENOTYPE</scope>
</reference>
<reference key="10">
    <citation type="journal article" date="2006" name="Dev. Growth Differ.">
        <title>Esg1, expressed exclusively in preimplantation embryos, germline, and embryonic stem cells, is a putative RNA-binding protein with broad RNA targets.</title>
        <authorList>
            <person name="Tanaka T.S."/>
            <person name="Lopez de Silanes I."/>
            <person name="Sharova L.V."/>
            <person name="Akutsu H."/>
            <person name="Yoshikawa T."/>
            <person name="Amano H."/>
            <person name="Yamanaka S."/>
            <person name="Gorospe M."/>
            <person name="Ko M.S."/>
        </authorList>
    </citation>
    <scope>SUBCELLULAR LOCATION</scope>
    <scope>RNA-BINDING</scope>
    <scope>DEVELOPMENTAL STAGE</scope>
</reference>
<reference key="11">
    <citation type="journal article" date="2007" name="Genomics">
        <title>Atypical structure and phylogenomic evolution of the new eutherian oocyte- and embryo-expressed KHDC1/DPPA5/ECAT1/OOEP gene family.</title>
        <authorList>
            <person name="Pierre A."/>
            <person name="Gautier M."/>
            <person name="Callebaut I."/>
            <person name="Bontoux M."/>
            <person name="Jeanpierre E."/>
            <person name="Pontarotti P."/>
            <person name="Monget P."/>
        </authorList>
    </citation>
    <scope>IDENTIFICATION</scope>
</reference>
<name>DPA5A_MOUSE</name>
<sequence length="118" mass="13810">MMVTLVTRKDIPPWVKVPEDLKDPEVFQVQSLVLKYLFGPQGSRMSHIEQVSQAMFELKNLESPEELIEVFIYGSQNNKIRAKWMLQSMAERYHLRQQKGVLKLEESMKTLELGQCIE</sequence>
<proteinExistence type="evidence at protein level"/>
<evidence type="ECO:0000269" key="1">
    <source>
    </source>
</evidence>
<evidence type="ECO:0000269" key="2">
    <source>
    </source>
</evidence>
<evidence type="ECO:0000269" key="3">
    <source>
    </source>
</evidence>
<evidence type="ECO:0000269" key="4">
    <source>
    </source>
</evidence>
<evidence type="ECO:0000269" key="5">
    <source>
    </source>
</evidence>
<evidence type="ECO:0000269" key="6">
    <source>
    </source>
</evidence>
<evidence type="ECO:0000269" key="7">
    <source>
    </source>
</evidence>
<evidence type="ECO:0000269" key="8">
    <source>
    </source>
</evidence>
<evidence type="ECO:0000305" key="9"/>
<keyword id="KW-0963">Cytoplasm</keyword>
<keyword id="KW-0217">Developmental protein</keyword>
<keyword id="KW-1185">Reference proteome</keyword>
<keyword id="KW-0694">RNA-binding</keyword>
<protein>
    <recommendedName>
        <fullName>Developmental pluripotency-associated protein 5A</fullName>
        <shortName>mDppa5</shortName>
    </recommendedName>
    <alternativeName>
        <fullName>ES cell-associated transcript 2 protein</fullName>
    </alternativeName>
    <alternativeName>
        <fullName>Embryonal stem cell-specific gene 1 protein</fullName>
        <shortName>ESG-1</shortName>
    </alternativeName>
    <alternativeName>
        <fullName>Protein pH 34</fullName>
    </alternativeName>
</protein>